<evidence type="ECO:0000255" key="1">
    <source>
        <dbReference type="HAMAP-Rule" id="MF_00181"/>
    </source>
</evidence>
<dbReference type="EC" id="3.4.11.1" evidence="1"/>
<dbReference type="EC" id="3.4.11.10" evidence="1"/>
<dbReference type="EMBL" id="AE016826">
    <property type="protein sequence ID" value="AAO27053.1"/>
    <property type="molecule type" value="Genomic_DNA"/>
</dbReference>
<dbReference type="RefSeq" id="WP_011091454.1">
    <property type="nucleotide sequence ID" value="NC_004545.1"/>
</dbReference>
<dbReference type="SMR" id="Q89AG2"/>
<dbReference type="STRING" id="224915.bbp_332"/>
<dbReference type="MEROPS" id="M17.003"/>
<dbReference type="KEGG" id="bab:bbp_332"/>
<dbReference type="eggNOG" id="COG0260">
    <property type="taxonomic scope" value="Bacteria"/>
</dbReference>
<dbReference type="HOGENOM" id="CLU_013734_2_2_6"/>
<dbReference type="OrthoDB" id="9809354at2"/>
<dbReference type="Proteomes" id="UP000000601">
    <property type="component" value="Chromosome"/>
</dbReference>
<dbReference type="GO" id="GO:0005737">
    <property type="term" value="C:cytoplasm"/>
    <property type="evidence" value="ECO:0007669"/>
    <property type="project" value="UniProtKB-SubCell"/>
</dbReference>
<dbReference type="GO" id="GO:0030145">
    <property type="term" value="F:manganese ion binding"/>
    <property type="evidence" value="ECO:0007669"/>
    <property type="project" value="UniProtKB-UniRule"/>
</dbReference>
<dbReference type="GO" id="GO:0070006">
    <property type="term" value="F:metalloaminopeptidase activity"/>
    <property type="evidence" value="ECO:0007669"/>
    <property type="project" value="InterPro"/>
</dbReference>
<dbReference type="GO" id="GO:0006508">
    <property type="term" value="P:proteolysis"/>
    <property type="evidence" value="ECO:0007669"/>
    <property type="project" value="UniProtKB-KW"/>
</dbReference>
<dbReference type="CDD" id="cd00433">
    <property type="entry name" value="Peptidase_M17"/>
    <property type="match status" value="1"/>
</dbReference>
<dbReference type="FunFam" id="3.40.630.10:FF:000004">
    <property type="entry name" value="Probable cytosol aminopeptidase"/>
    <property type="match status" value="1"/>
</dbReference>
<dbReference type="Gene3D" id="3.40.220.10">
    <property type="entry name" value="Leucine Aminopeptidase, subunit E, domain 1"/>
    <property type="match status" value="1"/>
</dbReference>
<dbReference type="Gene3D" id="3.40.630.10">
    <property type="entry name" value="Zn peptidases"/>
    <property type="match status" value="1"/>
</dbReference>
<dbReference type="HAMAP" id="MF_00181">
    <property type="entry name" value="Cytosol_peptidase_M17"/>
    <property type="match status" value="1"/>
</dbReference>
<dbReference type="InterPro" id="IPR011356">
    <property type="entry name" value="Leucine_aapep/pepB"/>
</dbReference>
<dbReference type="InterPro" id="IPR043472">
    <property type="entry name" value="Macro_dom-like"/>
</dbReference>
<dbReference type="InterPro" id="IPR000819">
    <property type="entry name" value="Peptidase_M17_C"/>
</dbReference>
<dbReference type="InterPro" id="IPR023042">
    <property type="entry name" value="Peptidase_M17_leu_NH2_pept"/>
</dbReference>
<dbReference type="InterPro" id="IPR008283">
    <property type="entry name" value="Peptidase_M17_N"/>
</dbReference>
<dbReference type="NCBIfam" id="NF002074">
    <property type="entry name" value="PRK00913.1-4"/>
    <property type="match status" value="1"/>
</dbReference>
<dbReference type="PANTHER" id="PTHR11963:SF23">
    <property type="entry name" value="CYTOSOL AMINOPEPTIDASE"/>
    <property type="match status" value="1"/>
</dbReference>
<dbReference type="PANTHER" id="PTHR11963">
    <property type="entry name" value="LEUCINE AMINOPEPTIDASE-RELATED"/>
    <property type="match status" value="1"/>
</dbReference>
<dbReference type="Pfam" id="PF00883">
    <property type="entry name" value="Peptidase_M17"/>
    <property type="match status" value="1"/>
</dbReference>
<dbReference type="Pfam" id="PF02789">
    <property type="entry name" value="Peptidase_M17_N"/>
    <property type="match status" value="1"/>
</dbReference>
<dbReference type="PRINTS" id="PR00481">
    <property type="entry name" value="LAMNOPPTDASE"/>
</dbReference>
<dbReference type="SUPFAM" id="SSF52949">
    <property type="entry name" value="Macro domain-like"/>
    <property type="match status" value="1"/>
</dbReference>
<dbReference type="SUPFAM" id="SSF53187">
    <property type="entry name" value="Zn-dependent exopeptidases"/>
    <property type="match status" value="1"/>
</dbReference>
<dbReference type="PROSITE" id="PS00631">
    <property type="entry name" value="CYTOSOL_AP"/>
    <property type="match status" value="1"/>
</dbReference>
<proteinExistence type="inferred from homology"/>
<feature type="chain" id="PRO_0000165732" description="Probable cytosol aminopeptidase">
    <location>
        <begin position="1"/>
        <end position="501"/>
    </location>
</feature>
<feature type="active site" evidence="1">
    <location>
        <position position="284"/>
    </location>
</feature>
<feature type="active site" evidence="1">
    <location>
        <position position="358"/>
    </location>
</feature>
<feature type="binding site" evidence="1">
    <location>
        <position position="272"/>
    </location>
    <ligand>
        <name>Mn(2+)</name>
        <dbReference type="ChEBI" id="CHEBI:29035"/>
        <label>2</label>
    </ligand>
</feature>
<feature type="binding site" evidence="1">
    <location>
        <position position="277"/>
    </location>
    <ligand>
        <name>Mn(2+)</name>
        <dbReference type="ChEBI" id="CHEBI:29035"/>
        <label>1</label>
    </ligand>
</feature>
<feature type="binding site" evidence="1">
    <location>
        <position position="277"/>
    </location>
    <ligand>
        <name>Mn(2+)</name>
        <dbReference type="ChEBI" id="CHEBI:29035"/>
        <label>2</label>
    </ligand>
</feature>
<feature type="binding site" evidence="1">
    <location>
        <position position="295"/>
    </location>
    <ligand>
        <name>Mn(2+)</name>
        <dbReference type="ChEBI" id="CHEBI:29035"/>
        <label>2</label>
    </ligand>
</feature>
<feature type="binding site" evidence="1">
    <location>
        <position position="354"/>
    </location>
    <ligand>
        <name>Mn(2+)</name>
        <dbReference type="ChEBI" id="CHEBI:29035"/>
        <label>1</label>
    </ligand>
</feature>
<feature type="binding site" evidence="1">
    <location>
        <position position="356"/>
    </location>
    <ligand>
        <name>Mn(2+)</name>
        <dbReference type="ChEBI" id="CHEBI:29035"/>
        <label>1</label>
    </ligand>
</feature>
<feature type="binding site" evidence="1">
    <location>
        <position position="356"/>
    </location>
    <ligand>
        <name>Mn(2+)</name>
        <dbReference type="ChEBI" id="CHEBI:29035"/>
        <label>2</label>
    </ligand>
</feature>
<sequence>MRYHISTNFFKKKYSDCLVFGIFDDLQLCESVKVIDSGSDGYVSRLIKDNEISGQINESLLLHSIPNFQKLKILFLGCGKKERFNINLYQKLFKTSINIIKKLSVKALIYFVTDFHIKNINTYWKIRHAVSEIQDNLYSFKNFKTSNNKNKFKISLEDIYFYLSDHDEINSGNNAIQHGYAISKGKKIARDLSNMPPNICNSSYLADQAMKLSQYYPDLIDVEIINDIDMNKLGMNAYLSVGKGSKNKSLMSIIKYHGISFSQCKNIILIGKGVTFDSGGISIKTSRDLDEMKFDMSGAAIVFGLMSIISDLKLPLNIIGILAGSENMVSSMSFRPGDILTTMSGKTVEILNTDAEGRLILCDVLTYVERFSPEVVIDIATLTGACVVALGHHTTGLLSNNDILAKDLQKASKQTRDLIWRMPLFEEYYKDLDSNVADMANVGTNSAGMITAACFLSKFSQKYAWAHLDVAGTAWISGKNKGSTGRPINLLTQFLLNKLYK</sequence>
<comment type="function">
    <text evidence="1">Presumably involved in the processing and regular turnover of intracellular proteins. Catalyzes the removal of unsubstituted N-terminal amino acids from various peptides.</text>
</comment>
<comment type="catalytic activity">
    <reaction evidence="1">
        <text>Release of an N-terminal amino acid, Xaa-|-Yaa-, in which Xaa is preferably Leu, but may be other amino acids including Pro although not Arg or Lys, and Yaa may be Pro. Amino acid amides and methyl esters are also readily hydrolyzed, but rates on arylamides are exceedingly low.</text>
        <dbReference type="EC" id="3.4.11.1"/>
    </reaction>
</comment>
<comment type="catalytic activity">
    <reaction evidence="1">
        <text>Release of an N-terminal amino acid, preferentially leucine, but not glutamic or aspartic acids.</text>
        <dbReference type="EC" id="3.4.11.10"/>
    </reaction>
</comment>
<comment type="cofactor">
    <cofactor evidence="1">
        <name>Mn(2+)</name>
        <dbReference type="ChEBI" id="CHEBI:29035"/>
    </cofactor>
    <text evidence="1">Binds 2 manganese ions per subunit.</text>
</comment>
<comment type="subcellular location">
    <subcellularLocation>
        <location evidence="1">Cytoplasm</location>
    </subcellularLocation>
</comment>
<comment type="similarity">
    <text evidence="1">Belongs to the peptidase M17 family.</text>
</comment>
<name>AMPA_BUCBP</name>
<gene>
    <name evidence="1" type="primary">pepA</name>
    <name type="ordered locus">bbp_332</name>
</gene>
<keyword id="KW-0031">Aminopeptidase</keyword>
<keyword id="KW-0963">Cytoplasm</keyword>
<keyword id="KW-0378">Hydrolase</keyword>
<keyword id="KW-0464">Manganese</keyword>
<keyword id="KW-0479">Metal-binding</keyword>
<keyword id="KW-0645">Protease</keyword>
<keyword id="KW-1185">Reference proteome</keyword>
<reference key="1">
    <citation type="journal article" date="2003" name="Proc. Natl. Acad. Sci. U.S.A.">
        <title>Reductive genome evolution in Buchnera aphidicola.</title>
        <authorList>
            <person name="van Ham R.C.H.J."/>
            <person name="Kamerbeek J."/>
            <person name="Palacios C."/>
            <person name="Rausell C."/>
            <person name="Abascal F."/>
            <person name="Bastolla U."/>
            <person name="Fernandez J.M."/>
            <person name="Jimenez L."/>
            <person name="Postigo M."/>
            <person name="Silva F.J."/>
            <person name="Tamames J."/>
            <person name="Viguera E."/>
            <person name="Latorre A."/>
            <person name="Valencia A."/>
            <person name="Moran F."/>
            <person name="Moya A."/>
        </authorList>
    </citation>
    <scope>NUCLEOTIDE SEQUENCE [LARGE SCALE GENOMIC DNA]</scope>
    <source>
        <strain>Bp</strain>
    </source>
</reference>
<organism>
    <name type="scientific">Buchnera aphidicola subsp. Baizongia pistaciae (strain Bp)</name>
    <dbReference type="NCBI Taxonomy" id="224915"/>
    <lineage>
        <taxon>Bacteria</taxon>
        <taxon>Pseudomonadati</taxon>
        <taxon>Pseudomonadota</taxon>
        <taxon>Gammaproteobacteria</taxon>
        <taxon>Enterobacterales</taxon>
        <taxon>Erwiniaceae</taxon>
        <taxon>Buchnera</taxon>
    </lineage>
</organism>
<accession>Q89AG2</accession>
<protein>
    <recommendedName>
        <fullName evidence="1">Probable cytosol aminopeptidase</fullName>
        <ecNumber evidence="1">3.4.11.1</ecNumber>
    </recommendedName>
    <alternativeName>
        <fullName evidence="1">Leucine aminopeptidase</fullName>
        <shortName evidence="1">LAP</shortName>
        <ecNumber evidence="1">3.4.11.10</ecNumber>
    </alternativeName>
    <alternativeName>
        <fullName evidence="1">Leucyl aminopeptidase</fullName>
    </alternativeName>
</protein>